<keyword id="KW-0067">ATP-binding</keyword>
<keyword id="KW-0436">Ligase</keyword>
<keyword id="KW-0460">Magnesium</keyword>
<keyword id="KW-0464">Manganese</keyword>
<keyword id="KW-0479">Metal-binding</keyword>
<keyword id="KW-0547">Nucleotide-binding</keyword>
<keyword id="KW-0648">Protein biosynthesis</keyword>
<dbReference type="EC" id="6.3.2.-" evidence="1"/>
<dbReference type="EMBL" id="CP001396">
    <property type="protein sequence ID" value="ACR65482.1"/>
    <property type="molecule type" value="Genomic_DNA"/>
</dbReference>
<dbReference type="RefSeq" id="WP_000684321.1">
    <property type="nucleotide sequence ID" value="NC_012759.1"/>
</dbReference>
<dbReference type="SMR" id="C4ZY24"/>
<dbReference type="GeneID" id="93776570"/>
<dbReference type="KEGG" id="ebw:BWG_0705"/>
<dbReference type="HOGENOM" id="CLU_054353_0_1_6"/>
<dbReference type="GO" id="GO:0005737">
    <property type="term" value="C:cytoplasm"/>
    <property type="evidence" value="ECO:0007669"/>
    <property type="project" value="TreeGrafter"/>
</dbReference>
<dbReference type="GO" id="GO:0005524">
    <property type="term" value="F:ATP binding"/>
    <property type="evidence" value="ECO:0007669"/>
    <property type="project" value="UniProtKB-UniRule"/>
</dbReference>
<dbReference type="GO" id="GO:0046872">
    <property type="term" value="F:metal ion binding"/>
    <property type="evidence" value="ECO:0007669"/>
    <property type="project" value="UniProtKB-KW"/>
</dbReference>
<dbReference type="GO" id="GO:0018169">
    <property type="term" value="F:ribosomal S6-glutamic acid ligase activity"/>
    <property type="evidence" value="ECO:0007669"/>
    <property type="project" value="UniProtKB-UniRule"/>
</dbReference>
<dbReference type="GO" id="GO:0036211">
    <property type="term" value="P:protein modification process"/>
    <property type="evidence" value="ECO:0007669"/>
    <property type="project" value="InterPro"/>
</dbReference>
<dbReference type="GO" id="GO:0009432">
    <property type="term" value="P:SOS response"/>
    <property type="evidence" value="ECO:0007669"/>
    <property type="project" value="TreeGrafter"/>
</dbReference>
<dbReference type="GO" id="GO:0006412">
    <property type="term" value="P:translation"/>
    <property type="evidence" value="ECO:0007669"/>
    <property type="project" value="UniProtKB-KW"/>
</dbReference>
<dbReference type="FunFam" id="3.40.50.20:FF:000004">
    <property type="entry name" value="Probable alpha-L-glutamate ligase"/>
    <property type="match status" value="1"/>
</dbReference>
<dbReference type="FunFam" id="3.30.1490.20:FF:000005">
    <property type="entry name" value="Probable alpha-L-glutamate ligase 1"/>
    <property type="match status" value="1"/>
</dbReference>
<dbReference type="FunFam" id="3.30.470.20:FF:000016">
    <property type="entry name" value="Ribosomal protein S6--L-glutamate ligase"/>
    <property type="match status" value="1"/>
</dbReference>
<dbReference type="Gene3D" id="3.40.50.20">
    <property type="match status" value="1"/>
</dbReference>
<dbReference type="Gene3D" id="3.30.1490.20">
    <property type="entry name" value="ATP-grasp fold, A domain"/>
    <property type="match status" value="1"/>
</dbReference>
<dbReference type="Gene3D" id="3.30.470.20">
    <property type="entry name" value="ATP-grasp fold, B domain"/>
    <property type="match status" value="1"/>
</dbReference>
<dbReference type="HAMAP" id="MF_01552">
    <property type="entry name" value="RimK"/>
    <property type="match status" value="1"/>
</dbReference>
<dbReference type="InterPro" id="IPR011761">
    <property type="entry name" value="ATP-grasp"/>
</dbReference>
<dbReference type="InterPro" id="IPR013651">
    <property type="entry name" value="ATP-grasp_RimK-type"/>
</dbReference>
<dbReference type="InterPro" id="IPR013815">
    <property type="entry name" value="ATP_grasp_subdomain_1"/>
</dbReference>
<dbReference type="InterPro" id="IPR023533">
    <property type="entry name" value="RimK"/>
</dbReference>
<dbReference type="InterPro" id="IPR041107">
    <property type="entry name" value="Rimk_N"/>
</dbReference>
<dbReference type="InterPro" id="IPR004666">
    <property type="entry name" value="Rp_bS6_RimK/Lys_biosynth_LsyX"/>
</dbReference>
<dbReference type="NCBIfam" id="NF007764">
    <property type="entry name" value="PRK10446.1"/>
    <property type="match status" value="1"/>
</dbReference>
<dbReference type="NCBIfam" id="TIGR00768">
    <property type="entry name" value="rimK_fam"/>
    <property type="match status" value="1"/>
</dbReference>
<dbReference type="PANTHER" id="PTHR21621:SF7">
    <property type="entry name" value="RIBOSOMAL PROTEIN BS6--L-GLUTAMATE LIGASE"/>
    <property type="match status" value="1"/>
</dbReference>
<dbReference type="PANTHER" id="PTHR21621">
    <property type="entry name" value="RIBOSOMAL PROTEIN S6 MODIFICATION PROTEIN"/>
    <property type="match status" value="1"/>
</dbReference>
<dbReference type="Pfam" id="PF08443">
    <property type="entry name" value="RimK"/>
    <property type="match status" value="1"/>
</dbReference>
<dbReference type="Pfam" id="PF18030">
    <property type="entry name" value="Rimk_N"/>
    <property type="match status" value="1"/>
</dbReference>
<dbReference type="SUPFAM" id="SSF56059">
    <property type="entry name" value="Glutathione synthetase ATP-binding domain-like"/>
    <property type="match status" value="1"/>
</dbReference>
<dbReference type="PROSITE" id="PS50975">
    <property type="entry name" value="ATP_GRASP"/>
    <property type="match status" value="1"/>
</dbReference>
<sequence length="300" mass="32436">MKIAILSRDGTLYSCKRLREAAIQRGHLVEILDPLSCYMNINPAASSIHYKGRKLPHFDAVIPRIGTAITFYGTAALRQFEMLGSYPLNESVAIARARDKLRSMQLLARQGIDLPVTGIAHSPDDTSDLIDMVGGAPLVVKLVEGTQGIGVVLAETRQAAESVIDAFRGLNAHILVQEYIKEAQGCDIRCLVVGDEVVAAIERRAKEGDFRSNLHRGGAASVASITPQEREIAIKAARTMALDVAGVDILRANRGPLVMEVNASPGLEGIEKTTGIDIAGKMIRWIERHATTEYCLKTGG</sequence>
<reference key="1">
    <citation type="journal article" date="2009" name="J. Bacteriol.">
        <title>Genomic sequencing reveals regulatory mutations and recombinational events in the widely used MC4100 lineage of Escherichia coli K-12.</title>
        <authorList>
            <person name="Ferenci T."/>
            <person name="Zhou Z."/>
            <person name="Betteridge T."/>
            <person name="Ren Y."/>
            <person name="Liu Y."/>
            <person name="Feng L."/>
            <person name="Reeves P.R."/>
            <person name="Wang L."/>
        </authorList>
    </citation>
    <scope>NUCLEOTIDE SEQUENCE [LARGE SCALE GENOMIC DNA]</scope>
    <source>
        <strain>K12 / MC4100 / BW2952</strain>
    </source>
</reference>
<feature type="chain" id="PRO_1000215475" description="Ribosomal protein bS6--L-glutamate ligase">
    <location>
        <begin position="1"/>
        <end position="300"/>
    </location>
</feature>
<feature type="domain" description="ATP-grasp" evidence="1">
    <location>
        <begin position="104"/>
        <end position="287"/>
    </location>
</feature>
<feature type="binding site" evidence="1">
    <location>
        <position position="141"/>
    </location>
    <ligand>
        <name>ATP</name>
        <dbReference type="ChEBI" id="CHEBI:30616"/>
    </ligand>
</feature>
<feature type="binding site" evidence="1">
    <location>
        <begin position="178"/>
        <end position="179"/>
    </location>
    <ligand>
        <name>ATP</name>
        <dbReference type="ChEBI" id="CHEBI:30616"/>
    </ligand>
</feature>
<feature type="binding site" evidence="1">
    <location>
        <position position="187"/>
    </location>
    <ligand>
        <name>ATP</name>
        <dbReference type="ChEBI" id="CHEBI:30616"/>
    </ligand>
</feature>
<feature type="binding site" evidence="1">
    <location>
        <begin position="211"/>
        <end position="213"/>
    </location>
    <ligand>
        <name>ATP</name>
        <dbReference type="ChEBI" id="CHEBI:30616"/>
    </ligand>
</feature>
<feature type="binding site" evidence="1">
    <location>
        <position position="248"/>
    </location>
    <ligand>
        <name>Mg(2+)</name>
        <dbReference type="ChEBI" id="CHEBI:18420"/>
        <label>1</label>
    </ligand>
</feature>
<feature type="binding site" evidence="1">
    <location>
        <position position="248"/>
    </location>
    <ligand>
        <name>Mn(2+)</name>
        <dbReference type="ChEBI" id="CHEBI:29035"/>
        <label>1</label>
    </ligand>
</feature>
<feature type="binding site" evidence="1">
    <location>
        <position position="260"/>
    </location>
    <ligand>
        <name>Mg(2+)</name>
        <dbReference type="ChEBI" id="CHEBI:18420"/>
        <label>1</label>
    </ligand>
</feature>
<feature type="binding site" evidence="1">
    <location>
        <position position="260"/>
    </location>
    <ligand>
        <name>Mg(2+)</name>
        <dbReference type="ChEBI" id="CHEBI:18420"/>
        <label>2</label>
    </ligand>
</feature>
<feature type="binding site" evidence="1">
    <location>
        <position position="260"/>
    </location>
    <ligand>
        <name>Mn(2+)</name>
        <dbReference type="ChEBI" id="CHEBI:29035"/>
        <label>1</label>
    </ligand>
</feature>
<feature type="binding site" evidence="1">
    <location>
        <position position="260"/>
    </location>
    <ligand>
        <name>Mn(2+)</name>
        <dbReference type="ChEBI" id="CHEBI:29035"/>
        <label>2</label>
    </ligand>
</feature>
<feature type="binding site" evidence="1">
    <location>
        <position position="262"/>
    </location>
    <ligand>
        <name>Mg(2+)</name>
        <dbReference type="ChEBI" id="CHEBI:18420"/>
        <label>2</label>
    </ligand>
</feature>
<feature type="binding site" evidence="1">
    <location>
        <position position="262"/>
    </location>
    <ligand>
        <name>Mn(2+)</name>
        <dbReference type="ChEBI" id="CHEBI:29035"/>
        <label>2</label>
    </ligand>
</feature>
<comment type="function">
    <text evidence="1">An L-glutamate ligase that catalyzes the ATP-dependent post-translational addition of glutamate residues to the C-terminus of ribosomal protein bS6 (RpsF). Is also able to catalyze the synthesis of poly-alpha-glutamate in vitro, via ATP hydrolysis from unprotected glutamate as substrate. The number of glutamate residues added to either RpsF or to poly-alpha-glutamate changes with pH.</text>
</comment>
<comment type="cofactor">
    <cofactor evidence="1">
        <name>Mg(2+)</name>
        <dbReference type="ChEBI" id="CHEBI:18420"/>
    </cofactor>
    <cofactor evidence="1">
        <name>Mn(2+)</name>
        <dbReference type="ChEBI" id="CHEBI:29035"/>
    </cofactor>
    <text evidence="1">Binds 2 magnesium or manganese ions per subunit.</text>
</comment>
<comment type="similarity">
    <text evidence="1">Belongs to the RimK family.</text>
</comment>
<name>RIMK_ECOBW</name>
<proteinExistence type="inferred from homology"/>
<organism>
    <name type="scientific">Escherichia coli (strain K12 / MC4100 / BW2952)</name>
    <dbReference type="NCBI Taxonomy" id="595496"/>
    <lineage>
        <taxon>Bacteria</taxon>
        <taxon>Pseudomonadati</taxon>
        <taxon>Pseudomonadota</taxon>
        <taxon>Gammaproteobacteria</taxon>
        <taxon>Enterobacterales</taxon>
        <taxon>Enterobacteriaceae</taxon>
        <taxon>Escherichia</taxon>
    </lineage>
</organism>
<protein>
    <recommendedName>
        <fullName evidence="1">Ribosomal protein bS6--L-glutamate ligase</fullName>
        <ecNumber evidence="1">6.3.2.-</ecNumber>
    </recommendedName>
    <alternativeName>
        <fullName evidence="1">Poly-alpha-glutamate synthase</fullName>
    </alternativeName>
    <alternativeName>
        <fullName evidence="1">Ribosomal protein bS6 modification protein</fullName>
    </alternativeName>
</protein>
<gene>
    <name evidence="1" type="primary">rimK</name>
    <name type="ordered locus">BWG_0705</name>
</gene>
<evidence type="ECO:0000255" key="1">
    <source>
        <dbReference type="HAMAP-Rule" id="MF_01552"/>
    </source>
</evidence>
<accession>C4ZY24</accession>